<proteinExistence type="inferred from homology"/>
<gene>
    <name type="primary">sbcC</name>
    <name type="ordered locus">USA300HOU_1281</name>
</gene>
<dbReference type="EMBL" id="CP000730">
    <property type="protein sequence ID" value="ABX29294.1"/>
    <property type="molecule type" value="Genomic_DNA"/>
</dbReference>
<dbReference type="RefSeq" id="WP_000803164.1">
    <property type="nucleotide sequence ID" value="NC_010079.1"/>
</dbReference>
<dbReference type="SMR" id="A8Z219"/>
<dbReference type="KEGG" id="sax:USA300HOU_1281"/>
<dbReference type="HOGENOM" id="CLU_004785_2_1_9"/>
<dbReference type="GO" id="GO:0005524">
    <property type="term" value="F:ATP binding"/>
    <property type="evidence" value="ECO:0007669"/>
    <property type="project" value="UniProtKB-KW"/>
</dbReference>
<dbReference type="GO" id="GO:0016887">
    <property type="term" value="F:ATP hydrolysis activity"/>
    <property type="evidence" value="ECO:0007669"/>
    <property type="project" value="InterPro"/>
</dbReference>
<dbReference type="GO" id="GO:0004519">
    <property type="term" value="F:endonuclease activity"/>
    <property type="evidence" value="ECO:0007669"/>
    <property type="project" value="UniProtKB-KW"/>
</dbReference>
<dbReference type="GO" id="GO:0004527">
    <property type="term" value="F:exonuclease activity"/>
    <property type="evidence" value="ECO:0007669"/>
    <property type="project" value="UniProtKB-KW"/>
</dbReference>
<dbReference type="GO" id="GO:0006310">
    <property type="term" value="P:DNA recombination"/>
    <property type="evidence" value="ECO:0007669"/>
    <property type="project" value="UniProtKB-KW"/>
</dbReference>
<dbReference type="GO" id="GO:0006260">
    <property type="term" value="P:DNA replication"/>
    <property type="evidence" value="ECO:0007669"/>
    <property type="project" value="UniProtKB-KW"/>
</dbReference>
<dbReference type="GO" id="GO:0006302">
    <property type="term" value="P:double-strand break repair"/>
    <property type="evidence" value="ECO:0007669"/>
    <property type="project" value="InterPro"/>
</dbReference>
<dbReference type="CDD" id="cd03279">
    <property type="entry name" value="ABC_sbcCD"/>
    <property type="match status" value="1"/>
</dbReference>
<dbReference type="Gene3D" id="1.10.287.510">
    <property type="entry name" value="Helix hairpin bin"/>
    <property type="match status" value="1"/>
</dbReference>
<dbReference type="Gene3D" id="3.40.50.300">
    <property type="entry name" value="P-loop containing nucleotide triphosphate hydrolases"/>
    <property type="match status" value="2"/>
</dbReference>
<dbReference type="InterPro" id="IPR027417">
    <property type="entry name" value="P-loop_NTPase"/>
</dbReference>
<dbReference type="InterPro" id="IPR038729">
    <property type="entry name" value="Rad50/SbcC_AAA"/>
</dbReference>
<dbReference type="InterPro" id="IPR053380">
    <property type="entry name" value="SbcCD_Nuclease_C"/>
</dbReference>
<dbReference type="NCBIfam" id="NF041751">
    <property type="entry name" value="sbcc_Staph"/>
    <property type="match status" value="1"/>
</dbReference>
<dbReference type="PANTHER" id="PTHR32114">
    <property type="entry name" value="ABC TRANSPORTER ABCH.3"/>
    <property type="match status" value="1"/>
</dbReference>
<dbReference type="PANTHER" id="PTHR32114:SF2">
    <property type="entry name" value="ABC TRANSPORTER ABCH.3"/>
    <property type="match status" value="1"/>
</dbReference>
<dbReference type="Pfam" id="PF13476">
    <property type="entry name" value="AAA_23"/>
    <property type="match status" value="1"/>
</dbReference>
<dbReference type="Pfam" id="PF13558">
    <property type="entry name" value="SbcC_Walker_B"/>
    <property type="match status" value="1"/>
</dbReference>
<dbReference type="SUPFAM" id="SSF52540">
    <property type="entry name" value="P-loop containing nucleoside triphosphate hydrolases"/>
    <property type="match status" value="1"/>
</dbReference>
<dbReference type="SUPFAM" id="SSF75712">
    <property type="entry name" value="Rad50 coiled-coil Zn hook"/>
    <property type="match status" value="1"/>
</dbReference>
<comment type="function">
    <text evidence="1">SbcCD cleaves DNA hairpin structures. These structures can inhibit DNA replication and are intermediates in certain DNA recombination reactions. The complex acts as a 3'-&gt;5' double strand exonuclease that can open hairpins. It also has a 5' single-strand endonuclease activity (By similarity).</text>
</comment>
<comment type="subunit">
    <text evidence="1">Heterodimer of SbcC and SbcD.</text>
</comment>
<comment type="similarity">
    <text evidence="3">Belongs to the SMC family. SbcC subfamily.</text>
</comment>
<name>SBCC_STAAT</name>
<reference key="1">
    <citation type="journal article" date="2007" name="BMC Microbiol.">
        <title>Subtle genetic changes enhance virulence of methicillin resistant and sensitive Staphylococcus aureus.</title>
        <authorList>
            <person name="Highlander S.K."/>
            <person name="Hulten K.G."/>
            <person name="Qin X."/>
            <person name="Jiang H."/>
            <person name="Yerrapragada S."/>
            <person name="Mason E.O. Jr."/>
            <person name="Shang Y."/>
            <person name="Williams T.M."/>
            <person name="Fortunov R.M."/>
            <person name="Liu Y."/>
            <person name="Igboeli O."/>
            <person name="Petrosino J."/>
            <person name="Tirumalai M."/>
            <person name="Uzman A."/>
            <person name="Fox G.E."/>
            <person name="Cardenas A.M."/>
            <person name="Muzny D.M."/>
            <person name="Hemphill L."/>
            <person name="Ding Y."/>
            <person name="Dugan S."/>
            <person name="Blyth P.R."/>
            <person name="Buhay C.J."/>
            <person name="Dinh H.H."/>
            <person name="Hawes A.C."/>
            <person name="Holder M."/>
            <person name="Kovar C.L."/>
            <person name="Lee S.L."/>
            <person name="Liu W."/>
            <person name="Nazareth L.V."/>
            <person name="Wang Q."/>
            <person name="Zhou J."/>
            <person name="Kaplan S.L."/>
            <person name="Weinstock G.M."/>
        </authorList>
    </citation>
    <scope>NUCLEOTIDE SEQUENCE [LARGE SCALE GENOMIC DNA]</scope>
    <source>
        <strain>USA300 / TCH1516</strain>
    </source>
</reference>
<accession>A8Z219</accession>
<evidence type="ECO:0000250" key="1"/>
<evidence type="ECO:0000255" key="2"/>
<evidence type="ECO:0000305" key="3"/>
<feature type="chain" id="PRO_0000338472" description="Nuclease SbcCD subunit C">
    <location>
        <begin position="1"/>
        <end position="1009"/>
    </location>
</feature>
<feature type="coiled-coil region" evidence="2">
    <location>
        <begin position="176"/>
        <end position="364"/>
    </location>
</feature>
<feature type="coiled-coil region" evidence="2">
    <location>
        <begin position="392"/>
        <end position="502"/>
    </location>
</feature>
<feature type="coiled-coil region" evidence="2">
    <location>
        <begin position="535"/>
        <end position="802"/>
    </location>
</feature>
<feature type="binding site" evidence="2">
    <location>
        <begin position="34"/>
        <end position="41"/>
    </location>
    <ligand>
        <name>ATP</name>
        <dbReference type="ChEBI" id="CHEBI:30616"/>
    </ligand>
</feature>
<sequence length="1009" mass="117317">MKPLHLKLNNFGPFLKEEIDFSKIDNNELFLISGKTGSGKTMIFDAMTYALFGKASTEQREENDLRSHFADGKQPMSVTFEFQLNHRIYKVHRQGPYIKEGNTTKTNAKFDVFEMVDGKYEIRESKVISGTQFIIELLGVNADQFRQLFILPQGEFKRFLISNSREKQGILRTLFDSEKFEAIREILKEEVKKEKAQIENRYQQIDLLWQEIESFDDDNIKGLLEVATQQIDKLIENIPLLQARSKEILASVNESKETAIKEFEIIEKKTLENNILKDNINQLNKNKIDFVQLKEQQPEIEGIEAKLKLLQDITNLLNYIENREKIETKIANSKKDISKTNNKILNLDCDKRNIDKEKKMLEENGDLIESKISFIDKTRVLFNDINKYQQSYLNIERLRTEGEQLGDELNDLIKGLETVEDSIGNNQSDYEKIIELNNTITNINNEINIIKENEKAKAELDKLLGSKQELENQINEETSILKNLEIKLDRYDKTKLDLNDKESFISEIKSAVNIGDQCPICGNEIQDLGHHIDFDSIAKRQNEIKEIEANIHAIKSNIAVHNSEIKFVNEKISNINIKTQSDFSLEVLNKRLLENENALNNQRDLNKFIEQMKEEKDNLTLQIHNKQLRLNKNESELKLCRDLITEFETLSKYNNITNFEVDYKKYVQDVNQHQELSKEIEDKLMQLSQRKLIEQNNLNHYENQLETYNNDLELNEQSIEMEMSRLNLTDDNDIDEIIAWRGEQEELEQKRDTYKKRYHEFEMEIARLESLTKDKELLDSDKLKDEYELKKGKMNTLIDEYSAVHYQCQNNINKTQSIVSHINYLNQELKDQQEIFQLAEIVSGKNNKNLTLENFVLIYYLDQIIAQANLRLATMSDNRYQLIRREAVSHGLSGLEIDVFDLHSNKSRHISSLSGGETFQSSLALALGLSEIVQQQSGGISLESIFIDEGFGTLDQETLETALDTLLNLKSTGRMVGIISHVSELKNRIPLVLEVKSDQYQSSTRFKRN</sequence>
<protein>
    <recommendedName>
        <fullName>Nuclease SbcCD subunit C</fullName>
    </recommendedName>
</protein>
<keyword id="KW-0067">ATP-binding</keyword>
<keyword id="KW-0175">Coiled coil</keyword>
<keyword id="KW-0233">DNA recombination</keyword>
<keyword id="KW-0235">DNA replication</keyword>
<keyword id="KW-0255">Endonuclease</keyword>
<keyword id="KW-0269">Exonuclease</keyword>
<keyword id="KW-0378">Hydrolase</keyword>
<keyword id="KW-0540">Nuclease</keyword>
<keyword id="KW-0547">Nucleotide-binding</keyword>
<organism>
    <name type="scientific">Staphylococcus aureus (strain USA300 / TCH1516)</name>
    <dbReference type="NCBI Taxonomy" id="451516"/>
    <lineage>
        <taxon>Bacteria</taxon>
        <taxon>Bacillati</taxon>
        <taxon>Bacillota</taxon>
        <taxon>Bacilli</taxon>
        <taxon>Bacillales</taxon>
        <taxon>Staphylococcaceae</taxon>
        <taxon>Staphylococcus</taxon>
    </lineage>
</organism>